<reference key="1">
    <citation type="submission" date="2007-11" db="EMBL/GenBank/DDBJ databases">
        <authorList>
            <consortium name="The Salmonella enterica serovar Paratyphi B Genome Sequencing Project"/>
            <person name="McClelland M."/>
            <person name="Sanderson E.K."/>
            <person name="Porwollik S."/>
            <person name="Spieth J."/>
            <person name="Clifton W.S."/>
            <person name="Fulton R."/>
            <person name="Cordes M."/>
            <person name="Wollam A."/>
            <person name="Shah N."/>
            <person name="Pepin K."/>
            <person name="Bhonagiri V."/>
            <person name="Nash W."/>
            <person name="Johnson M."/>
            <person name="Thiruvilangam P."/>
            <person name="Wilson R."/>
        </authorList>
    </citation>
    <scope>NUCLEOTIDE SEQUENCE [LARGE SCALE GENOMIC DNA]</scope>
    <source>
        <strain>ATCC BAA-1250 / SPB7</strain>
    </source>
</reference>
<protein>
    <recommendedName>
        <fullName evidence="1">Cobalamin biosynthesis protein CbiB</fullName>
    </recommendedName>
</protein>
<comment type="function">
    <text evidence="1">Converts cobyric acid to cobinamide by the addition of aminopropanol on the F carboxylic group. However, the true cosubstrate could be (R)-1-amino-2-propanol O-2-phosphate, leading to cobinamide phosphate.</text>
</comment>
<comment type="pathway">
    <text evidence="1">Cofactor biosynthesis; adenosylcobalamin biosynthesis.</text>
</comment>
<comment type="subcellular location">
    <subcellularLocation>
        <location evidence="1">Cell membrane</location>
        <topology evidence="1">Multi-pass membrane protein</topology>
    </subcellularLocation>
</comment>
<comment type="similarity">
    <text evidence="1">Belongs to the CobD/CbiB family.</text>
</comment>
<organism>
    <name type="scientific">Salmonella paratyphi B (strain ATCC BAA-1250 / SPB7)</name>
    <dbReference type="NCBI Taxonomy" id="1016998"/>
    <lineage>
        <taxon>Bacteria</taxon>
        <taxon>Pseudomonadati</taxon>
        <taxon>Pseudomonadota</taxon>
        <taxon>Gammaproteobacteria</taxon>
        <taxon>Enterobacterales</taxon>
        <taxon>Enterobacteriaceae</taxon>
        <taxon>Salmonella</taxon>
    </lineage>
</organism>
<proteinExistence type="inferred from homology"/>
<gene>
    <name evidence="1" type="primary">cbiB</name>
    <name type="ordered locus">SPAB_01071</name>
</gene>
<name>CBIB_SALPB</name>
<dbReference type="EMBL" id="CP000886">
    <property type="protein sequence ID" value="ABX66492.1"/>
    <property type="molecule type" value="Genomic_DNA"/>
</dbReference>
<dbReference type="RefSeq" id="WP_000153660.1">
    <property type="nucleotide sequence ID" value="NC_010102.1"/>
</dbReference>
<dbReference type="KEGG" id="spq:SPAB_01071"/>
<dbReference type="PATRIC" id="fig|1016998.12.peg.1012"/>
<dbReference type="HOGENOM" id="CLU_054212_0_0_6"/>
<dbReference type="BioCyc" id="SENT1016998:SPAB_RS04475-MONOMER"/>
<dbReference type="UniPathway" id="UPA00148"/>
<dbReference type="Proteomes" id="UP000008556">
    <property type="component" value="Chromosome"/>
</dbReference>
<dbReference type="GO" id="GO:0005886">
    <property type="term" value="C:plasma membrane"/>
    <property type="evidence" value="ECO:0007669"/>
    <property type="project" value="UniProtKB-SubCell"/>
</dbReference>
<dbReference type="GO" id="GO:0015420">
    <property type="term" value="F:ABC-type vitamin B12 transporter activity"/>
    <property type="evidence" value="ECO:0007669"/>
    <property type="project" value="UniProtKB-UniRule"/>
</dbReference>
<dbReference type="GO" id="GO:0048472">
    <property type="term" value="F:threonine-phosphate decarboxylase activity"/>
    <property type="evidence" value="ECO:0007669"/>
    <property type="project" value="InterPro"/>
</dbReference>
<dbReference type="GO" id="GO:0009236">
    <property type="term" value="P:cobalamin biosynthetic process"/>
    <property type="evidence" value="ECO:0007669"/>
    <property type="project" value="UniProtKB-UniRule"/>
</dbReference>
<dbReference type="HAMAP" id="MF_00024">
    <property type="entry name" value="CobD_CbiB"/>
    <property type="match status" value="1"/>
</dbReference>
<dbReference type="InterPro" id="IPR004485">
    <property type="entry name" value="Cobalamin_biosynth_CobD/CbiB"/>
</dbReference>
<dbReference type="NCBIfam" id="TIGR00380">
    <property type="entry name" value="cobal_cbiB"/>
    <property type="match status" value="1"/>
</dbReference>
<dbReference type="PANTHER" id="PTHR34308">
    <property type="entry name" value="COBALAMIN BIOSYNTHESIS PROTEIN CBIB"/>
    <property type="match status" value="1"/>
</dbReference>
<dbReference type="PANTHER" id="PTHR34308:SF1">
    <property type="entry name" value="COBALAMIN BIOSYNTHESIS PROTEIN CBIB"/>
    <property type="match status" value="1"/>
</dbReference>
<dbReference type="Pfam" id="PF03186">
    <property type="entry name" value="CobD_Cbib"/>
    <property type="match status" value="1"/>
</dbReference>
<accession>A9MT86</accession>
<feature type="chain" id="PRO_1000074384" description="Cobalamin biosynthesis protein CbiB">
    <location>
        <begin position="1"/>
        <end position="319"/>
    </location>
</feature>
<feature type="transmembrane region" description="Helical" evidence="1">
    <location>
        <begin position="56"/>
        <end position="76"/>
    </location>
</feature>
<feature type="transmembrane region" description="Helical" evidence="1">
    <location>
        <begin position="82"/>
        <end position="102"/>
    </location>
</feature>
<feature type="transmembrane region" description="Helical" evidence="1">
    <location>
        <begin position="153"/>
        <end position="173"/>
    </location>
</feature>
<feature type="transmembrane region" description="Helical" evidence="1">
    <location>
        <begin position="204"/>
        <end position="224"/>
    </location>
</feature>
<feature type="transmembrane region" description="Helical" evidence="1">
    <location>
        <begin position="296"/>
        <end position="316"/>
    </location>
</feature>
<sequence>MTILAWCIAWVLDFIIGDPQHWPHPVRWIGRLITFVQRIVRRYCPGDKALRIGGGVMWVVVVGATWGVAWGVLALAQRIHPWFGWSVEVWMIFTTLAGRSLARAAQEVERPLRENDLAESRIKLSWIVGRDTSQLQPAQINRGVVETVAENTVDGIIAPLFFLFLGGAPLAMAYKAVNTLDSMVGYKHEKYRAIGMVSARMDDVANYLPARLSWLLLGIAAGLCRLSGWRALRIGWRDRYNHSSPNCAWSEACVAGALGIQLGGPNNYFGERVDKPWIGDAQRDISVDDISRTIRLMWVASTLALALFIAARCGLSGVA</sequence>
<keyword id="KW-1003">Cell membrane</keyword>
<keyword id="KW-0169">Cobalamin biosynthesis</keyword>
<keyword id="KW-0472">Membrane</keyword>
<keyword id="KW-0812">Transmembrane</keyword>
<keyword id="KW-1133">Transmembrane helix</keyword>
<evidence type="ECO:0000255" key="1">
    <source>
        <dbReference type="HAMAP-Rule" id="MF_00024"/>
    </source>
</evidence>